<gene>
    <name evidence="1" type="primary">glyA</name>
    <name type="ordered locus">SSU05_0852</name>
</gene>
<dbReference type="EC" id="2.1.2.1" evidence="1"/>
<dbReference type="EMBL" id="CP000407">
    <property type="protein sequence ID" value="ABP89818.1"/>
    <property type="molecule type" value="Genomic_DNA"/>
</dbReference>
<dbReference type="SMR" id="A4VUM9"/>
<dbReference type="STRING" id="391295.SSU05_0852"/>
<dbReference type="KEGG" id="ssu:SSU05_0852"/>
<dbReference type="eggNOG" id="COG0112">
    <property type="taxonomic scope" value="Bacteria"/>
</dbReference>
<dbReference type="HOGENOM" id="CLU_022477_2_1_9"/>
<dbReference type="UniPathway" id="UPA00193"/>
<dbReference type="UniPathway" id="UPA00288">
    <property type="reaction ID" value="UER01023"/>
</dbReference>
<dbReference type="GO" id="GO:0005829">
    <property type="term" value="C:cytosol"/>
    <property type="evidence" value="ECO:0007669"/>
    <property type="project" value="TreeGrafter"/>
</dbReference>
<dbReference type="GO" id="GO:0004372">
    <property type="term" value="F:glycine hydroxymethyltransferase activity"/>
    <property type="evidence" value="ECO:0007669"/>
    <property type="project" value="UniProtKB-UniRule"/>
</dbReference>
<dbReference type="GO" id="GO:0030170">
    <property type="term" value="F:pyridoxal phosphate binding"/>
    <property type="evidence" value="ECO:0007669"/>
    <property type="project" value="UniProtKB-UniRule"/>
</dbReference>
<dbReference type="GO" id="GO:0019264">
    <property type="term" value="P:glycine biosynthetic process from serine"/>
    <property type="evidence" value="ECO:0007669"/>
    <property type="project" value="UniProtKB-UniRule"/>
</dbReference>
<dbReference type="GO" id="GO:0035999">
    <property type="term" value="P:tetrahydrofolate interconversion"/>
    <property type="evidence" value="ECO:0007669"/>
    <property type="project" value="UniProtKB-UniRule"/>
</dbReference>
<dbReference type="CDD" id="cd00378">
    <property type="entry name" value="SHMT"/>
    <property type="match status" value="1"/>
</dbReference>
<dbReference type="FunFam" id="3.40.640.10:FF:000001">
    <property type="entry name" value="Serine hydroxymethyltransferase"/>
    <property type="match status" value="1"/>
</dbReference>
<dbReference type="FunFam" id="3.90.1150.10:FF:000072">
    <property type="entry name" value="Serine hydroxymethyltransferase"/>
    <property type="match status" value="1"/>
</dbReference>
<dbReference type="Gene3D" id="3.90.1150.10">
    <property type="entry name" value="Aspartate Aminotransferase, domain 1"/>
    <property type="match status" value="1"/>
</dbReference>
<dbReference type="Gene3D" id="3.40.640.10">
    <property type="entry name" value="Type I PLP-dependent aspartate aminotransferase-like (Major domain)"/>
    <property type="match status" value="1"/>
</dbReference>
<dbReference type="HAMAP" id="MF_00051">
    <property type="entry name" value="SHMT"/>
    <property type="match status" value="1"/>
</dbReference>
<dbReference type="InterPro" id="IPR015424">
    <property type="entry name" value="PyrdxlP-dep_Trfase"/>
</dbReference>
<dbReference type="InterPro" id="IPR015421">
    <property type="entry name" value="PyrdxlP-dep_Trfase_major"/>
</dbReference>
<dbReference type="InterPro" id="IPR015422">
    <property type="entry name" value="PyrdxlP-dep_Trfase_small"/>
</dbReference>
<dbReference type="InterPro" id="IPR001085">
    <property type="entry name" value="Ser_HO-MeTrfase"/>
</dbReference>
<dbReference type="InterPro" id="IPR049943">
    <property type="entry name" value="Ser_HO-MeTrfase-like"/>
</dbReference>
<dbReference type="InterPro" id="IPR019798">
    <property type="entry name" value="Ser_HO-MeTrfase_PLP_BS"/>
</dbReference>
<dbReference type="InterPro" id="IPR039429">
    <property type="entry name" value="SHMT-like_dom"/>
</dbReference>
<dbReference type="NCBIfam" id="NF000586">
    <property type="entry name" value="PRK00011.1"/>
    <property type="match status" value="1"/>
</dbReference>
<dbReference type="PANTHER" id="PTHR11680">
    <property type="entry name" value="SERINE HYDROXYMETHYLTRANSFERASE"/>
    <property type="match status" value="1"/>
</dbReference>
<dbReference type="PANTHER" id="PTHR11680:SF35">
    <property type="entry name" value="SERINE HYDROXYMETHYLTRANSFERASE 1"/>
    <property type="match status" value="1"/>
</dbReference>
<dbReference type="Pfam" id="PF00464">
    <property type="entry name" value="SHMT"/>
    <property type="match status" value="1"/>
</dbReference>
<dbReference type="PIRSF" id="PIRSF000412">
    <property type="entry name" value="SHMT"/>
    <property type="match status" value="1"/>
</dbReference>
<dbReference type="SUPFAM" id="SSF53383">
    <property type="entry name" value="PLP-dependent transferases"/>
    <property type="match status" value="1"/>
</dbReference>
<dbReference type="PROSITE" id="PS00096">
    <property type="entry name" value="SHMT"/>
    <property type="match status" value="1"/>
</dbReference>
<feature type="chain" id="PRO_1000006334" description="Serine hydroxymethyltransferase">
    <location>
        <begin position="1"/>
        <end position="419"/>
    </location>
</feature>
<feature type="binding site" evidence="1">
    <location>
        <position position="121"/>
    </location>
    <ligand>
        <name>(6S)-5,6,7,8-tetrahydrofolate</name>
        <dbReference type="ChEBI" id="CHEBI:57453"/>
    </ligand>
</feature>
<feature type="binding site" evidence="1">
    <location>
        <begin position="125"/>
        <end position="127"/>
    </location>
    <ligand>
        <name>(6S)-5,6,7,8-tetrahydrofolate</name>
        <dbReference type="ChEBI" id="CHEBI:57453"/>
    </ligand>
</feature>
<feature type="binding site" evidence="1">
    <location>
        <position position="246"/>
    </location>
    <ligand>
        <name>(6S)-5,6,7,8-tetrahydrofolate</name>
        <dbReference type="ChEBI" id="CHEBI:57453"/>
    </ligand>
</feature>
<feature type="binding site" evidence="1">
    <location>
        <begin position="355"/>
        <end position="357"/>
    </location>
    <ligand>
        <name>(6S)-5,6,7,8-tetrahydrofolate</name>
        <dbReference type="ChEBI" id="CHEBI:57453"/>
    </ligand>
</feature>
<feature type="site" description="Plays an important role in substrate specificity" evidence="1">
    <location>
        <position position="229"/>
    </location>
</feature>
<feature type="modified residue" description="N6-(pyridoxal phosphate)lysine" evidence="1">
    <location>
        <position position="230"/>
    </location>
</feature>
<sequence length="419" mass="45504">MIFDKVNYKEFDKEVWEAIQAEEKRQQNNIELIASENVVSKAVMAAQGSILTNKYAEGYPGRRYYGGTECVDVVESLAIERAKEIFGAKFANVQPHSGSQANCAAYMALIEPGDTVMGMDLAAGGHLTHGASVSFSGQTYNFVAYNVDEETGLLDYDAILKQAKEVQPKLIVAGASAYARTIDFAKFREIADAVGAKLMVDMAHIAGLVAAGLHPNPVPHAHITTTTTHKTLRGPRGGLILTNDEELIKKINSAIFPGIQGGPLEHVIAAKAVSFKEVLDPAFKDYAQKVIENSKAMAEVFLANPNFKVITGGTDNHLFLVDVTKVVENGKVAQHLLDEVNITLNKNSIPYEKLSPFKTSGIRIGSAAITARGFGVEEARKVAQLTIKALENAENEKALEEVRQEVRALTDQFPLYEGL</sequence>
<reference key="1">
    <citation type="journal article" date="2007" name="PLoS ONE">
        <title>A glimpse of streptococcal toxic shock syndrome from comparative genomics of S. suis 2 Chinese isolates.</title>
        <authorList>
            <person name="Chen C."/>
            <person name="Tang J."/>
            <person name="Dong W."/>
            <person name="Wang C."/>
            <person name="Feng Y."/>
            <person name="Wang J."/>
            <person name="Zheng F."/>
            <person name="Pan X."/>
            <person name="Liu D."/>
            <person name="Li M."/>
            <person name="Song Y."/>
            <person name="Zhu X."/>
            <person name="Sun H."/>
            <person name="Feng T."/>
            <person name="Guo Z."/>
            <person name="Ju A."/>
            <person name="Ge J."/>
            <person name="Dong Y."/>
            <person name="Sun W."/>
            <person name="Jiang Y."/>
            <person name="Wang J."/>
            <person name="Yan J."/>
            <person name="Yang H."/>
            <person name="Wang X."/>
            <person name="Gao G.F."/>
            <person name="Yang R."/>
            <person name="Wang J."/>
            <person name="Yu J."/>
        </authorList>
    </citation>
    <scope>NUCLEOTIDE SEQUENCE [LARGE SCALE GENOMIC DNA]</scope>
    <source>
        <strain>05ZYH33</strain>
    </source>
</reference>
<keyword id="KW-0028">Amino-acid biosynthesis</keyword>
<keyword id="KW-0963">Cytoplasm</keyword>
<keyword id="KW-0554">One-carbon metabolism</keyword>
<keyword id="KW-0663">Pyridoxal phosphate</keyword>
<keyword id="KW-0808">Transferase</keyword>
<organism>
    <name type="scientific">Streptococcus suis (strain 05ZYH33)</name>
    <dbReference type="NCBI Taxonomy" id="391295"/>
    <lineage>
        <taxon>Bacteria</taxon>
        <taxon>Bacillati</taxon>
        <taxon>Bacillota</taxon>
        <taxon>Bacilli</taxon>
        <taxon>Lactobacillales</taxon>
        <taxon>Streptococcaceae</taxon>
        <taxon>Streptococcus</taxon>
    </lineage>
</organism>
<protein>
    <recommendedName>
        <fullName evidence="1">Serine hydroxymethyltransferase</fullName>
        <shortName evidence="1">SHMT</shortName>
        <shortName evidence="1">Serine methylase</shortName>
        <ecNumber evidence="1">2.1.2.1</ecNumber>
    </recommendedName>
</protein>
<accession>A4VUM9</accession>
<name>GLYA_STRSY</name>
<proteinExistence type="inferred from homology"/>
<comment type="function">
    <text evidence="1">Catalyzes the reversible interconversion of serine and glycine with tetrahydrofolate (THF) serving as the one-carbon carrier. This reaction serves as the major source of one-carbon groups required for the biosynthesis of purines, thymidylate, methionine, and other important biomolecules. Also exhibits THF-independent aldolase activity toward beta-hydroxyamino acids, producing glycine and aldehydes, via a retro-aldol mechanism.</text>
</comment>
<comment type="catalytic activity">
    <reaction evidence="1">
        <text>(6R)-5,10-methylene-5,6,7,8-tetrahydrofolate + glycine + H2O = (6S)-5,6,7,8-tetrahydrofolate + L-serine</text>
        <dbReference type="Rhea" id="RHEA:15481"/>
        <dbReference type="ChEBI" id="CHEBI:15377"/>
        <dbReference type="ChEBI" id="CHEBI:15636"/>
        <dbReference type="ChEBI" id="CHEBI:33384"/>
        <dbReference type="ChEBI" id="CHEBI:57305"/>
        <dbReference type="ChEBI" id="CHEBI:57453"/>
        <dbReference type="EC" id="2.1.2.1"/>
    </reaction>
</comment>
<comment type="cofactor">
    <cofactor evidence="1">
        <name>pyridoxal 5'-phosphate</name>
        <dbReference type="ChEBI" id="CHEBI:597326"/>
    </cofactor>
</comment>
<comment type="pathway">
    <text evidence="1">One-carbon metabolism; tetrahydrofolate interconversion.</text>
</comment>
<comment type="pathway">
    <text evidence="1">Amino-acid biosynthesis; glycine biosynthesis; glycine from L-serine: step 1/1.</text>
</comment>
<comment type="subunit">
    <text evidence="1">Homodimer.</text>
</comment>
<comment type="subcellular location">
    <subcellularLocation>
        <location evidence="1">Cytoplasm</location>
    </subcellularLocation>
</comment>
<comment type="similarity">
    <text evidence="1">Belongs to the SHMT family.</text>
</comment>
<evidence type="ECO:0000255" key="1">
    <source>
        <dbReference type="HAMAP-Rule" id="MF_00051"/>
    </source>
</evidence>